<proteinExistence type="evidence at protein level"/>
<protein>
    <recommendedName>
        <fullName>Alpha-(1-&gt;6)-mannopyranosyltransferase A</fullName>
        <shortName>MptA</shortName>
        <ecNumber>2.4.1.-</ecNumber>
    </recommendedName>
    <alternativeName>
        <fullName>Polyprenyl-1-monophosphorylmannose dependent alpha-(1-&gt;6)-mannopyranosyltransferase</fullName>
        <shortName>PPM-dependent alpha-(1-&gt;6)-mannopyranosyltransferase</shortName>
    </alternativeName>
</protein>
<name>MPTA_MYCTU</name>
<sequence>MTTPSHAPAVDLATAKDAVVQHLSRLFEFTTGPQGGPARLGFAGAVLITAGGLGAGSVRQHDPLLESIHMSWLRFGHGLVLSSILLWTGVGVMLLAWLGLGRRVLAGEATEFTMRATTVIWLAPLLLSVPVFSRDTYSYLAQGALLRDGLDPYAVGPVGNPNALLDDVSPIWTITTAPYGPAFILVAKFVTVIVGNNVVAGTMLLRLCMLPGLALLVWATPRLASHLGTHGPTALWICVLNPLVLIHLMGGVHNEMLMVGLMTAGIALTVQGRNVAGIILITVAIAVKATAGIALPFLVWVWLRHLRERRGYRPVQAFLAAAAISLLIFVAVFAVLSAVAGVGLGWLTALAGSVKIINWLTVPTGAANVIHALGRGLFTVDFYTLLRITRLIGIVIIAVSLPLLWWRFRRDDRAALTGVAWSMLIVVLFVPAALPWYYSWPLAVAAPLAQARRAIAAIAGLSTWVMVIFKPDGSHGMYSWLHFWIATACALTAWYVLYRSPDRRGVQAATPVVNTP</sequence>
<gene>
    <name type="primary">mptA</name>
    <name type="ordered locus">Rv2174</name>
</gene>
<dbReference type="EC" id="2.4.1.-"/>
<dbReference type="EMBL" id="AL123456">
    <property type="protein sequence ID" value="CCP44951.1"/>
    <property type="molecule type" value="Genomic_DNA"/>
</dbReference>
<dbReference type="PIR" id="H70935">
    <property type="entry name" value="H70935"/>
</dbReference>
<dbReference type="RefSeq" id="NP_216690.1">
    <property type="nucleotide sequence ID" value="NC_000962.3"/>
</dbReference>
<dbReference type="FunCoup" id="O53508">
    <property type="interactions" value="12"/>
</dbReference>
<dbReference type="STRING" id="83332.Rv2174"/>
<dbReference type="iPTMnet" id="O53508"/>
<dbReference type="PaxDb" id="83332-Rv2174"/>
<dbReference type="DNASU" id="887528"/>
<dbReference type="GeneID" id="887528"/>
<dbReference type="KEGG" id="mtu:Rv2174"/>
<dbReference type="KEGG" id="mtv:RVBD_2174"/>
<dbReference type="TubercuList" id="Rv2174"/>
<dbReference type="eggNOG" id="ENOG502Z9GU">
    <property type="taxonomic scope" value="Bacteria"/>
</dbReference>
<dbReference type="InParanoid" id="O53508"/>
<dbReference type="OrthoDB" id="5242303at2"/>
<dbReference type="PhylomeDB" id="O53508"/>
<dbReference type="Proteomes" id="UP000001584">
    <property type="component" value="Chromosome"/>
</dbReference>
<dbReference type="GO" id="GO:0016020">
    <property type="term" value="C:membrane"/>
    <property type="evidence" value="ECO:0007669"/>
    <property type="project" value="UniProtKB-SubCell"/>
</dbReference>
<dbReference type="GO" id="GO:0000030">
    <property type="term" value="F:mannosyltransferase activity"/>
    <property type="evidence" value="ECO:0000315"/>
    <property type="project" value="MTBBASE"/>
</dbReference>
<dbReference type="GO" id="GO:0009247">
    <property type="term" value="P:glycolipid biosynthetic process"/>
    <property type="evidence" value="ECO:0000315"/>
    <property type="project" value="MTBBASE"/>
</dbReference>
<dbReference type="InterPro" id="IPR017822">
    <property type="entry name" value="MptA-like"/>
</dbReference>
<dbReference type="InterPro" id="IPR049829">
    <property type="entry name" value="MptA/B-like"/>
</dbReference>
<dbReference type="NCBIfam" id="TIGR03459">
    <property type="entry name" value="crt_membr"/>
    <property type="match status" value="1"/>
</dbReference>
<dbReference type="NCBIfam" id="NF038066">
    <property type="entry name" value="MptB"/>
    <property type="match status" value="1"/>
</dbReference>
<accession>O53508</accession>
<accession>F2GJZ8</accession>
<accession>L0TBQ4</accession>
<evidence type="ECO:0000255" key="1"/>
<evidence type="ECO:0000269" key="2">
    <source>
    </source>
</evidence>
<evidence type="ECO:0000305" key="3"/>
<evidence type="ECO:0007744" key="4">
    <source>
    </source>
</evidence>
<reference key="1">
    <citation type="journal article" date="1998" name="Nature">
        <title>Deciphering the biology of Mycobacterium tuberculosis from the complete genome sequence.</title>
        <authorList>
            <person name="Cole S.T."/>
            <person name="Brosch R."/>
            <person name="Parkhill J."/>
            <person name="Garnier T."/>
            <person name="Churcher C.M."/>
            <person name="Harris D.E."/>
            <person name="Gordon S.V."/>
            <person name="Eiglmeier K."/>
            <person name="Gas S."/>
            <person name="Barry C.E. III"/>
            <person name="Tekaia F."/>
            <person name="Badcock K."/>
            <person name="Basham D."/>
            <person name="Brown D."/>
            <person name="Chillingworth T."/>
            <person name="Connor R."/>
            <person name="Davies R.M."/>
            <person name="Devlin K."/>
            <person name="Feltwell T."/>
            <person name="Gentles S."/>
            <person name="Hamlin N."/>
            <person name="Holroyd S."/>
            <person name="Hornsby T."/>
            <person name="Jagels K."/>
            <person name="Krogh A."/>
            <person name="McLean J."/>
            <person name="Moule S."/>
            <person name="Murphy L.D."/>
            <person name="Oliver S."/>
            <person name="Osborne J."/>
            <person name="Quail M.A."/>
            <person name="Rajandream M.A."/>
            <person name="Rogers J."/>
            <person name="Rutter S."/>
            <person name="Seeger K."/>
            <person name="Skelton S."/>
            <person name="Squares S."/>
            <person name="Squares R."/>
            <person name="Sulston J.E."/>
            <person name="Taylor K."/>
            <person name="Whitehead S."/>
            <person name="Barrell B.G."/>
        </authorList>
    </citation>
    <scope>NUCLEOTIDE SEQUENCE [LARGE SCALE GENOMIC DNA]</scope>
    <source>
        <strain>ATCC 25618 / H37Rv</strain>
    </source>
</reference>
<reference key="2">
    <citation type="journal article" date="2007" name="Mol. Microbiol.">
        <title>Identification of an alpha(1--&gt;6) mannopyranosyltransferase (MptA), involved in Corynebacterium glutamicum lipomanann biosynthesis, and identification of its orthologue in Mycobacterium tuberculosis.</title>
        <authorList>
            <person name="Mishra A.K."/>
            <person name="Alderwick L.J."/>
            <person name="Rittmann D."/>
            <person name="Tatituri R.V."/>
            <person name="Nigou J."/>
            <person name="Gilleron M."/>
            <person name="Eggeling L."/>
            <person name="Besra G.S."/>
        </authorList>
    </citation>
    <scope>FUNCTION</scope>
</reference>
<reference key="3">
    <citation type="journal article" date="2011" name="Mol. Cell. Proteomics">
        <title>Proteogenomic analysis of Mycobacterium tuberculosis by high resolution mass spectrometry.</title>
        <authorList>
            <person name="Kelkar D.S."/>
            <person name="Kumar D."/>
            <person name="Kumar P."/>
            <person name="Balakrishnan L."/>
            <person name="Muthusamy B."/>
            <person name="Yadav A.K."/>
            <person name="Shrivastava P."/>
            <person name="Marimuthu A."/>
            <person name="Anand S."/>
            <person name="Sundaram H."/>
            <person name="Kingsbury R."/>
            <person name="Harsha H.C."/>
            <person name="Nair B."/>
            <person name="Prasad T.S."/>
            <person name="Chauhan D.S."/>
            <person name="Katoch K."/>
            <person name="Katoch V.M."/>
            <person name="Kumar P."/>
            <person name="Chaerkady R."/>
            <person name="Ramachandran S."/>
            <person name="Dash D."/>
            <person name="Pandey A."/>
        </authorList>
    </citation>
    <scope>ACETYLATION [LARGE SCALE ANALYSIS] AT THR-2</scope>
    <scope>CLEAVAGE OF INITIATOR METHIONINE [LARGE SCALE ANALYSIS]</scope>
    <scope>IDENTIFICATION BY MASS SPECTROMETRY [LARGE SCALE ANALYSIS]</scope>
    <source>
        <strain>ATCC 25618 / H37Rv</strain>
    </source>
</reference>
<keyword id="KW-0007">Acetylation</keyword>
<keyword id="KW-0328">Glycosyltransferase</keyword>
<keyword id="KW-0472">Membrane</keyword>
<keyword id="KW-1185">Reference proteome</keyword>
<keyword id="KW-0808">Transferase</keyword>
<keyword id="KW-0812">Transmembrane</keyword>
<keyword id="KW-1133">Transmembrane helix</keyword>
<feature type="initiator methionine" description="Removed" evidence="4">
    <location>
        <position position="1"/>
    </location>
</feature>
<feature type="chain" id="PRO_0000420592" description="Alpha-(1-&gt;6)-mannopyranosyltransferase A">
    <location>
        <begin position="2"/>
        <end position="516"/>
    </location>
</feature>
<feature type="transmembrane region" description="Helical" evidence="1">
    <location>
        <begin position="38"/>
        <end position="58"/>
    </location>
</feature>
<feature type="transmembrane region" description="Helical" evidence="1">
    <location>
        <begin position="78"/>
        <end position="98"/>
    </location>
</feature>
<feature type="transmembrane region" description="Helical" evidence="1">
    <location>
        <begin position="112"/>
        <end position="132"/>
    </location>
</feature>
<feature type="transmembrane region" description="Helical" evidence="1">
    <location>
        <begin position="174"/>
        <end position="194"/>
    </location>
</feature>
<feature type="transmembrane region" description="Helical" evidence="1">
    <location>
        <begin position="198"/>
        <end position="218"/>
    </location>
</feature>
<feature type="transmembrane region" description="Helical" evidence="1">
    <location>
        <begin position="232"/>
        <end position="252"/>
    </location>
</feature>
<feature type="transmembrane region" description="Helical" evidence="1">
    <location>
        <begin position="278"/>
        <end position="298"/>
    </location>
</feature>
<feature type="transmembrane region" description="Helical" evidence="1">
    <location>
        <begin position="326"/>
        <end position="346"/>
    </location>
</feature>
<feature type="transmembrane region" description="Helical" evidence="1">
    <location>
        <begin position="350"/>
        <end position="370"/>
    </location>
</feature>
<feature type="transmembrane region" description="Helical" evidence="1">
    <location>
        <begin position="385"/>
        <end position="405"/>
    </location>
</feature>
<feature type="transmembrane region" description="Helical" evidence="1">
    <location>
        <begin position="414"/>
        <end position="434"/>
    </location>
</feature>
<feature type="transmembrane region" description="Helical" evidence="1">
    <location>
        <begin position="454"/>
        <end position="474"/>
    </location>
</feature>
<feature type="transmembrane region" description="Helical" evidence="1">
    <location>
        <begin position="477"/>
        <end position="497"/>
    </location>
</feature>
<feature type="modified residue" description="N-acetylthreonine" evidence="4">
    <location>
        <position position="2"/>
    </location>
</feature>
<organism>
    <name type="scientific">Mycobacterium tuberculosis (strain ATCC 25618 / H37Rv)</name>
    <dbReference type="NCBI Taxonomy" id="83332"/>
    <lineage>
        <taxon>Bacteria</taxon>
        <taxon>Bacillati</taxon>
        <taxon>Actinomycetota</taxon>
        <taxon>Actinomycetes</taxon>
        <taxon>Mycobacteriales</taxon>
        <taxon>Mycobacteriaceae</taxon>
        <taxon>Mycobacterium</taxon>
        <taxon>Mycobacterium tuberculosis complex</taxon>
    </lineage>
</organism>
<comment type="function">
    <text evidence="2">Involved in the latter stages of the biosynthesis of the alpha-(1-&gt;6) mannan core of lipomannan (LM). Catalyzes the addition of alpha-(1-&gt;6)-mannose residue.</text>
</comment>
<comment type="subcellular location">
    <subcellularLocation>
        <location evidence="3">Membrane</location>
        <topology evidence="3">Multi-pass membrane protein</topology>
    </subcellularLocation>
</comment>
<comment type="similarity">
    <text evidence="3">Belongs to the MptA/B family.</text>
</comment>